<reference key="1">
    <citation type="journal article" date="2003" name="Genome Res.">
        <title>The secreted protein discovery initiative (SPDI), a large-scale effort to identify novel human secreted and transmembrane proteins: a bioinformatics assessment.</title>
        <authorList>
            <person name="Clark H.F."/>
            <person name="Gurney A.L."/>
            <person name="Abaya E."/>
            <person name="Baker K."/>
            <person name="Baldwin D.T."/>
            <person name="Brush J."/>
            <person name="Chen J."/>
            <person name="Chow B."/>
            <person name="Chui C."/>
            <person name="Crowley C."/>
            <person name="Currell B."/>
            <person name="Deuel B."/>
            <person name="Dowd P."/>
            <person name="Eaton D."/>
            <person name="Foster J.S."/>
            <person name="Grimaldi C."/>
            <person name="Gu Q."/>
            <person name="Hass P.E."/>
            <person name="Heldens S."/>
            <person name="Huang A."/>
            <person name="Kim H.S."/>
            <person name="Klimowski L."/>
            <person name="Jin Y."/>
            <person name="Johnson S."/>
            <person name="Lee J."/>
            <person name="Lewis L."/>
            <person name="Liao D."/>
            <person name="Mark M.R."/>
            <person name="Robbie E."/>
            <person name="Sanchez C."/>
            <person name="Schoenfeld J."/>
            <person name="Seshagiri S."/>
            <person name="Simmons L."/>
            <person name="Singh J."/>
            <person name="Smith V."/>
            <person name="Stinson J."/>
            <person name="Vagts A."/>
            <person name="Vandlen R.L."/>
            <person name="Watanabe C."/>
            <person name="Wieand D."/>
            <person name="Woods K."/>
            <person name="Xie M.-H."/>
            <person name="Yansura D.G."/>
            <person name="Yi S."/>
            <person name="Yu G."/>
            <person name="Yuan J."/>
            <person name="Zhang M."/>
            <person name="Zhang Z."/>
            <person name="Goddard A.D."/>
            <person name="Wood W.I."/>
            <person name="Godowski P.J."/>
            <person name="Gray A.M."/>
        </authorList>
    </citation>
    <scope>NUCLEOTIDE SEQUENCE [LARGE SCALE MRNA]</scope>
</reference>
<reference key="2">
    <citation type="submission" date="2005-07" db="EMBL/GenBank/DDBJ databases">
        <authorList>
            <person name="Mural R.J."/>
            <person name="Istrail S."/>
            <person name="Sutton G.G."/>
            <person name="Florea L."/>
            <person name="Halpern A.L."/>
            <person name="Mobarry C.M."/>
            <person name="Lippert R."/>
            <person name="Walenz B."/>
            <person name="Shatkay H."/>
            <person name="Dew I."/>
            <person name="Miller J.R."/>
            <person name="Flanigan M.J."/>
            <person name="Edwards N.J."/>
            <person name="Bolanos R."/>
            <person name="Fasulo D."/>
            <person name="Halldorsson B.V."/>
            <person name="Hannenhalli S."/>
            <person name="Turner R."/>
            <person name="Yooseph S."/>
            <person name="Lu F."/>
            <person name="Nusskern D.R."/>
            <person name="Shue B.C."/>
            <person name="Zheng X.H."/>
            <person name="Zhong F."/>
            <person name="Delcher A.L."/>
            <person name="Huson D.H."/>
            <person name="Kravitz S.A."/>
            <person name="Mouchard L."/>
            <person name="Reinert K."/>
            <person name="Remington K.A."/>
            <person name="Clark A.G."/>
            <person name="Waterman M.S."/>
            <person name="Eichler E.E."/>
            <person name="Adams M.D."/>
            <person name="Hunkapiller M.W."/>
            <person name="Myers E.W."/>
            <person name="Venter J.C."/>
        </authorList>
    </citation>
    <scope>NUCLEOTIDE SEQUENCE [LARGE SCALE GENOMIC DNA]</scope>
</reference>
<reference key="3">
    <citation type="journal article" date="2004" name="Genome Res.">
        <title>The status, quality, and expansion of the NIH full-length cDNA project: the Mammalian Gene Collection (MGC).</title>
        <authorList>
            <consortium name="The MGC Project Team"/>
        </authorList>
    </citation>
    <scope>NUCLEOTIDE SEQUENCE [LARGE SCALE MRNA]</scope>
    <source>
        <tissue>Cervix</tissue>
    </source>
</reference>
<reference key="4">
    <citation type="journal article" date="1998" name="Hum. Mol. Genet.">
        <title>Huntingtin interacts with a family of WW domain proteins.</title>
        <authorList>
            <person name="Faber P.W."/>
            <person name="Barnes G.T."/>
            <person name="Srinidhi J."/>
            <person name="Chen J."/>
            <person name="Gusella J.F."/>
            <person name="MacDonald M.E."/>
        </authorList>
    </citation>
    <scope>NUCLEOTIDE SEQUENCE [MRNA] OF 275-458</scope>
    <scope>INTERACTION WITH HD</scope>
    <source>
        <tissue>Frontal cortex</tissue>
    </source>
</reference>
<reference key="5">
    <citation type="journal article" date="2009" name="Mol. Cell">
        <title>The fic domain: regulation of cell signaling by adenylylation.</title>
        <authorList>
            <person name="Worby C.A."/>
            <person name="Mattoo S."/>
            <person name="Kruger R.P."/>
            <person name="Corbeil L.B."/>
            <person name="Koller A."/>
            <person name="Mendez J.C."/>
            <person name="Zekarias B."/>
            <person name="Lazar C."/>
            <person name="Dixon J.E."/>
        </authorList>
    </citation>
    <scope>FUNCTION</scope>
    <scope>CATALYTIC ACTIVITY</scope>
    <scope>TISSUE SPECIFICITY</scope>
    <scope>MUTAGENESIS OF HIS-363</scope>
</reference>
<reference key="6">
    <citation type="journal article" date="2012" name="Nature">
        <title>Adenylylation control by intra- or intermolecular active-site obstruction in Fic proteins.</title>
        <authorList>
            <person name="Engel P."/>
            <person name="Goepfert A."/>
            <person name="Stanger F.V."/>
            <person name="Harms A."/>
            <person name="Schmidt A."/>
            <person name="Schirmer T."/>
            <person name="Dehio C."/>
        </authorList>
    </citation>
    <scope>FUNCTION</scope>
    <scope>ACTIVITY REGULATION</scope>
    <scope>MUTAGENESIS OF GLU-234</scope>
</reference>
<reference key="7">
    <citation type="journal article" date="2015" name="J. Biol. Chem.">
        <title>A novel link between Fic (filamentation induced by cAMP)-mediated adenylylation/AMPylation and the unfolded protein response.</title>
        <authorList>
            <person name="Sanyal A."/>
            <person name="Chen A.J."/>
            <person name="Nakayasu E.S."/>
            <person name="Lazar C.S."/>
            <person name="Zbornik E.A."/>
            <person name="Worby C.A."/>
            <person name="Koller A."/>
            <person name="Mattoo S."/>
        </authorList>
    </citation>
    <scope>FUNCTION</scope>
    <scope>CATALYTIC ACTIVITY</scope>
    <scope>COFACTOR</scope>
    <scope>SUBCELLULAR LOCATION</scope>
    <scope>TOPOLOGY</scope>
    <scope>INDUCTION</scope>
    <scope>AMPYLATION AT SER-79; THR-80 AND THR-183</scope>
    <scope>GLYCOSYLATION AT ASN-275 AND ASN-446</scope>
    <scope>MUTAGENESIS OF 77-THR-SER-78; 79-SER-THR-80; THR-183; GLU-234; ASN-275; HIS-363 AND ASN-446</scope>
</reference>
<reference key="8">
    <citation type="journal article" date="2022" name="Genet. Med.">
        <title>BiP inactivation due to loss of the deAMPylation function of FICD causes a motor neuron disease.</title>
        <authorList>
            <person name="Rebelo A.P."/>
            <person name="Ruiz A."/>
            <person name="Dohrn M.F."/>
            <person name="Wayand M."/>
            <person name="Farooq A."/>
            <person name="Danzi M.C."/>
            <person name="Beijer D."/>
            <person name="Aaron B."/>
            <person name="Vandrovcova J."/>
            <person name="Houlden H."/>
            <person name="Matalonga L."/>
            <person name="Abreu L."/>
            <person name="Rouleau G."/>
            <person name="Estiar M.A."/>
            <person name="Van de Vondel L."/>
            <person name="Gan-Or Z."/>
            <person name="Baets J."/>
            <person name="Schuele R."/>
            <person name="Zuchner S."/>
        </authorList>
    </citation>
    <scope>INVOLVEMENT IN SPG92</scope>
    <scope>VARIANT SPG92 HIS-374</scope>
    <scope>CHARACTERIZATION OF VARIANT SPG92 HIS-374</scope>
    <scope>FUNCTION</scope>
    <scope>SUBUNIT</scope>
    <scope>SUBCELLULAR LOCATION</scope>
</reference>
<reference evidence="17 18 19 20 21" key="9">
    <citation type="journal article" date="2014" name="Structure">
        <title>Crystal structure of the human, FIC-domain containing protein HYPE and implications for its functions.</title>
        <authorList>
            <person name="Bunney T.D."/>
            <person name="Cole A.R."/>
            <person name="Broncel M."/>
            <person name="Esposito D."/>
            <person name="Tate E.W."/>
            <person name="Katan M."/>
        </authorList>
    </citation>
    <scope>X-RAY CRYSTALLOGRAPHY (2.48 ANGSTROMS) OF 102-445 IN COMPLEX WITH ADP AND ATP</scope>
    <scope>FUNCTION</scope>
    <scope>AMPYLATION</scope>
    <scope>CATALYTIC ACTIVITY</scope>
    <scope>SUBUNIT</scope>
    <scope>ACTIVITY REGULATION</scope>
    <scope>ACTIVE SITE</scope>
    <scope>MUTAGENESIS OF THR-168; SER-170; TYR-172; GLU-234 AND LEU-258</scope>
</reference>
<comment type="function">
    <text evidence="1 6 7 8 9 14">Protein that can both mediate the addition of adenosine 5'-monophosphate (AMP) to specific residues of target proteins (AMPylation), and the removal of the same modification from target proteins (de-AMPylation), depending on the context (By similarity). The side chain of Glu-231 determines which of the two opposing activities (AMPylase or de-AMPylase) will take place (PubMed:36136088). Acts as a key regulator of the ERN1/IRE1-mediated unfolded protein response (UPR) by mediating AMPylation or de-AMPylation of HSPA5/BiP (PubMed:25601083, PubMed:36136088). In unstressed cells, acts as an adenylyltransferase by mediating AMPylation of HSPA5/BiP at 'Thr-518', thereby inactivating it (By similarity). In response to endoplasmic reticulum stress, acts as a phosphodiesterase by mediating removal of ATP (de-AMPylation) from HSPA5/BiP at 'Thr-518', leading to restore HSPA5/BiP activity (By similarity). Although it is able to AMPylate RhoA, Rac and Cdc42 Rho GTPases in vitro, Rho GTPases do not constitute physiological substrates (PubMed:19362538, PubMed:25601083).</text>
</comment>
<comment type="catalytic activity">
    <reaction evidence="5">
        <text>L-tyrosyl-[protein] + ATP = O-(5'-adenylyl)-L-tyrosyl-[protein] + diphosphate</text>
        <dbReference type="Rhea" id="RHEA:54288"/>
        <dbReference type="Rhea" id="RHEA-COMP:10136"/>
        <dbReference type="Rhea" id="RHEA-COMP:13846"/>
        <dbReference type="ChEBI" id="CHEBI:30616"/>
        <dbReference type="ChEBI" id="CHEBI:33019"/>
        <dbReference type="ChEBI" id="CHEBI:46858"/>
        <dbReference type="ChEBI" id="CHEBI:83624"/>
        <dbReference type="EC" id="2.7.7.108"/>
    </reaction>
</comment>
<comment type="catalytic activity">
    <reaction evidence="1">
        <text>3-O-(5'-adenylyl)-L-threonyl-[protein] + H2O = L-threonyl-[protein] + AMP + H(+)</text>
        <dbReference type="Rhea" id="RHEA:55932"/>
        <dbReference type="Rhea" id="RHEA-COMP:11060"/>
        <dbReference type="Rhea" id="RHEA-COMP:13847"/>
        <dbReference type="ChEBI" id="CHEBI:15377"/>
        <dbReference type="ChEBI" id="CHEBI:15378"/>
        <dbReference type="ChEBI" id="CHEBI:30013"/>
        <dbReference type="ChEBI" id="CHEBI:138113"/>
        <dbReference type="ChEBI" id="CHEBI:456215"/>
    </reaction>
</comment>
<comment type="catalytic activity">
    <reaction evidence="5 7 8">
        <text>L-threonyl-[protein] + ATP = 3-O-(5'-adenylyl)-L-threonyl-[protein] + diphosphate</text>
        <dbReference type="Rhea" id="RHEA:54292"/>
        <dbReference type="Rhea" id="RHEA-COMP:11060"/>
        <dbReference type="Rhea" id="RHEA-COMP:13847"/>
        <dbReference type="ChEBI" id="CHEBI:30013"/>
        <dbReference type="ChEBI" id="CHEBI:30616"/>
        <dbReference type="ChEBI" id="CHEBI:33019"/>
        <dbReference type="ChEBI" id="CHEBI:138113"/>
        <dbReference type="EC" id="2.7.7.108"/>
    </reaction>
</comment>
<comment type="cofactor">
    <cofactor evidence="8">
        <name>Mg(2+)</name>
        <dbReference type="ChEBI" id="CHEBI:18420"/>
    </cofactor>
    <cofactor evidence="8">
        <name>Mn(2+)</name>
        <dbReference type="ChEBI" id="CHEBI:29035"/>
    </cofactor>
    <text evidence="8">Divalent metal cation. Prefers Mn(2+) over Mg(2+).</text>
</comment>
<comment type="activity regulation">
    <text evidence="1 6 7">The side chain of Glu-234 determines which of the two opposing activities (AMPylase or de-AMPylase) will take place. In response to endoplasmic reticulum stress, mediates de-AMPylase activity (By similarity). Adenylyltransferase activity is inhibited by the inhibitory helix present at the N-terminus: Glu-234 binds ATP and competes with ATP-binding at Arg-374, thereby preventing adenylyltransferase activity (PubMed:22266942, PubMed:25435325). In unstressed cells, disengagement of Glu-234 promotes adenylyltransferase activity (By similarity). Activation dissociates ATP-binding from Glu-234, allowing ordered binding of the entire ATP moiety with the alpha-phosphate in an orientation that is productive for accepting an incoming target hydroxyl side chain (PubMed:22266942, PubMed:25435325).</text>
</comment>
<comment type="subunit">
    <text evidence="7 9 10">Homodimer (PubMed:25435325, PubMed:36136088). Interacts with HD (PubMed:9700202).</text>
</comment>
<comment type="interaction">
    <interactant intactId="EBI-3907198">
        <id>Q9BVA6</id>
    </interactant>
    <interactant intactId="EBI-3907198">
        <id>Q9BVA6</id>
        <label>FICD</label>
    </interactant>
    <organismsDiffer>false</organismsDiffer>
    <experiments>5</experiments>
</comment>
<comment type="interaction">
    <interactant intactId="EBI-3907198">
        <id>Q9BVA6</id>
    </interactant>
    <interactant intactId="EBI-466029">
        <id>P42858</id>
        <label>HTT</label>
    </interactant>
    <organismsDiffer>false</organismsDiffer>
    <experiments>3</experiments>
</comment>
<comment type="subcellular location">
    <subcellularLocation>
        <location evidence="8 9">Endoplasmic reticulum membrane</location>
        <topology evidence="15">Single-pass type II membrane protein</topology>
    </subcellularLocation>
</comment>
<comment type="tissue specificity">
    <text evidence="5">Ubiquitous.</text>
</comment>
<comment type="induction">
    <text evidence="8">Up-regulated in response to activation of unfolded protein response (UPR).</text>
</comment>
<comment type="domain">
    <text evidence="5">The fido domain mediates the adenylyltransferase activity.</text>
</comment>
<comment type="PTM">
    <text evidence="7 8">Auto-AMPylated in vitro; it is unclear whether auto-AMPylation is relevant in vivo.</text>
</comment>
<comment type="PTM">
    <text evidence="8">N-glycosylated; predominantly glycosylated at Asn-275.</text>
</comment>
<comment type="disease" evidence="9">
    <disease id="DI-06927">
        <name>Spastic paraplegia 92, autosomal recessive</name>
        <acronym>SPG92</acronym>
        <description>A form of spastic paraplegia, a neurodegenerative disorder characterized by a slow, gradual, progressive weakness and spasticity of the lower limbs. Rate of progression and the severity of symptoms are quite variable. Initial symptoms may include difficulty with balance, weakness and stiffness in the legs, muscle spasms, and dragging the toes when walking. In some forms of the disorder, bladder symptoms (such as incontinence) may appear, or the weakness and stiffness may spread to other parts of the body. SPG92 is an autosomal recessive form characterized by onset of lower limb spasticity and gait abnormalities in the first or second decade of life. Some patients have mild cognitive deficits.</description>
        <dbReference type="MIM" id="620911"/>
    </disease>
    <text>The disease may be caused by variants affecting the gene represented in this entry.</text>
</comment>
<comment type="similarity">
    <text evidence="13">Belongs to the fic family.</text>
</comment>
<comment type="caution">
    <text evidence="1 8">Was initially thought to mediate AMPylation of HSPA5/BiP at 'Ser-365' and 'Thr-366' in vitro, leading to activate HSPA5/BiP (PubMed:25601083). However, it was later shown that it mediates AMPylation of HSPA5/BiP at 'Thr-518', leading to inactivate HSPA5/BiP.</text>
</comment>
<feature type="chain" id="PRO_0000317301" description="Protein adenylyltransferase FICD">
    <location>
        <begin position="1"/>
        <end position="458"/>
    </location>
</feature>
<feature type="topological domain" description="Cytoplasmic" evidence="15">
    <location>
        <begin position="1"/>
        <end position="23"/>
    </location>
</feature>
<feature type="transmembrane region" description="Helical; Signal-anchor for type II membrane protein" evidence="2">
    <location>
        <begin position="24"/>
        <end position="44"/>
    </location>
</feature>
<feature type="topological domain" description="Lumenal" evidence="15">
    <location>
        <begin position="45"/>
        <end position="458"/>
    </location>
</feature>
<feature type="repeat" description="TPR 1">
    <location>
        <begin position="106"/>
        <end position="139"/>
    </location>
</feature>
<feature type="repeat" description="TPR 2">
    <location>
        <begin position="140"/>
        <end position="173"/>
    </location>
</feature>
<feature type="domain" description="Fido" evidence="4">
    <location>
        <begin position="285"/>
        <end position="420"/>
    </location>
</feature>
<feature type="short sequence motif" description="Inhibitory (S/T)XXXE(G/N) motif" evidence="6">
    <location>
        <begin position="230"/>
        <end position="235"/>
    </location>
</feature>
<feature type="active site" evidence="6">
    <location>
        <position position="363"/>
    </location>
</feature>
<feature type="binding site" evidence="7 18 20">
    <location>
        <position position="234"/>
    </location>
    <ligand>
        <name>ATP</name>
        <dbReference type="ChEBI" id="CHEBI:30616"/>
    </ligand>
</feature>
<feature type="binding site" evidence="7 18 19 20">
    <location>
        <begin position="316"/>
        <end position="319"/>
    </location>
    <ligand>
        <name>ATP</name>
        <dbReference type="ChEBI" id="CHEBI:30616"/>
    </ligand>
</feature>
<feature type="binding site" evidence="7 18">
    <location>
        <begin position="367"/>
        <end position="374"/>
    </location>
    <ligand>
        <name>ATP</name>
        <dbReference type="ChEBI" id="CHEBI:30616"/>
    </ligand>
</feature>
<feature type="binding site" evidence="7 18 19 20">
    <location>
        <begin position="399"/>
        <end position="400"/>
    </location>
    <ligand>
        <name>ATP</name>
        <dbReference type="ChEBI" id="CHEBI:30616"/>
    </ligand>
</feature>
<feature type="binding site" evidence="7 18 19 20">
    <location>
        <position position="407"/>
    </location>
    <ligand>
        <name>ATP</name>
        <dbReference type="ChEBI" id="CHEBI:30616"/>
    </ligand>
</feature>
<feature type="site" description="Important for autoinhibition of adenylyltransferase activity" evidence="6 7">
    <location>
        <position position="234"/>
    </location>
</feature>
<feature type="modified residue" description="O-AMP-serine; by autocatalysis" evidence="15">
    <location>
        <position position="79"/>
    </location>
</feature>
<feature type="modified residue" description="O-AMP-threonine; by autocatalysis" evidence="15">
    <location>
        <position position="80"/>
    </location>
</feature>
<feature type="modified residue" description="O-AMP-threonine; by autocatalysis" evidence="15">
    <location>
        <position position="183"/>
    </location>
</feature>
<feature type="glycosylation site" description="N-linked (GlcNAc...) asparagine" evidence="3 8">
    <location>
        <position position="275"/>
    </location>
</feature>
<feature type="glycosylation site" description="N-linked (GlcNAc...) asparagine" evidence="3 8">
    <location>
        <position position="446"/>
    </location>
</feature>
<feature type="sequence variant" id="VAR_089958" description="In SPG92; uncertain significance; decreased de-AMPylation activity resulting in significantly increased levels of AMPylated HSPA5/BiP in patient cells; dbSNP:rs200289202." evidence="9">
    <original>R</original>
    <variation>H</variation>
    <location>
        <position position="374"/>
    </location>
</feature>
<feature type="mutagenesis site" description="Does not affect auto-AMPylation." evidence="8">
    <original>TS</original>
    <variation>AA</variation>
    <location>
        <begin position="76"/>
        <end position="77"/>
    </location>
</feature>
<feature type="mutagenesis site" description="Decreased AMPylation." evidence="8">
    <original>ST</original>
    <variation>AA</variation>
    <location>
        <begin position="79"/>
        <end position="80"/>
    </location>
</feature>
<feature type="mutagenesis site" description="Does not affect level of auto-AMPylation." evidence="7">
    <original>T</original>
    <variation>A</variation>
    <location>
        <position position="168"/>
    </location>
</feature>
<feature type="mutagenesis site" description="Does not affect level of auto-AMPylation." evidence="7">
    <original>S</original>
    <variation>A</variation>
    <location>
        <position position="170"/>
    </location>
</feature>
<feature type="mutagenesis site" description="Does not affect level of auto-AMPylation." evidence="7">
    <original>Y</original>
    <variation>F</variation>
    <location>
        <position position="172"/>
    </location>
</feature>
<feature type="mutagenesis site" description="Decreased AMPylation." evidence="8">
    <original>T</original>
    <variation>A</variation>
    <location>
        <position position="183"/>
    </location>
</feature>
<feature type="mutagenesis site" description="Promotes adenylyltransferase activity." evidence="6 7 8">
    <original>E</original>
    <variation>G</variation>
    <location>
        <position position="234"/>
    </location>
</feature>
<feature type="mutagenesis site" description="Abolishes homodimerization." evidence="7">
    <original>L</original>
    <variation>D</variation>
    <location>
        <position position="258"/>
    </location>
</feature>
<feature type="mutagenesis site" description="Strongly decreased N-glycosylation. Abolished N-glycosylation; when associated with Q-446." evidence="8">
    <original>N</original>
    <variation>Q</variation>
    <location>
        <position position="275"/>
    </location>
</feature>
<feature type="mutagenesis site" description="Abolishes adenylyltransferase activity." evidence="5 8">
    <original>H</original>
    <variation>A</variation>
    <location>
        <position position="363"/>
    </location>
</feature>
<feature type="mutagenesis site" description="Slightly decreased N-glycosylation. Abolished N-glycosylation; when associated with Q-275." evidence="8">
    <original>N</original>
    <variation>Q</variation>
    <location>
        <position position="446"/>
    </location>
</feature>
<feature type="helix" evidence="24">
    <location>
        <begin position="104"/>
        <end position="119"/>
    </location>
</feature>
<feature type="helix" evidence="24">
    <location>
        <begin position="122"/>
        <end position="135"/>
    </location>
</feature>
<feature type="helix" evidence="24">
    <location>
        <begin position="140"/>
        <end position="152"/>
    </location>
</feature>
<feature type="helix" evidence="24">
    <location>
        <begin position="156"/>
        <end position="169"/>
    </location>
</feature>
<feature type="helix" evidence="24">
    <location>
        <begin position="174"/>
        <end position="206"/>
    </location>
</feature>
<feature type="helix" evidence="24">
    <location>
        <begin position="214"/>
        <end position="232"/>
    </location>
</feature>
<feature type="turn" evidence="24">
    <location>
        <begin position="233"/>
        <end position="235"/>
    </location>
</feature>
<feature type="helix" evidence="24">
    <location>
        <begin position="240"/>
        <end position="249"/>
    </location>
</feature>
<feature type="strand" evidence="23">
    <location>
        <begin position="254"/>
        <end position="256"/>
    </location>
</feature>
<feature type="helix" evidence="24">
    <location>
        <begin position="258"/>
        <end position="277"/>
    </location>
</feature>
<feature type="turn" evidence="24">
    <location>
        <begin position="278"/>
        <end position="280"/>
    </location>
</feature>
<feature type="helix" evidence="24">
    <location>
        <begin position="287"/>
        <end position="297"/>
    </location>
</feature>
<feature type="turn" evidence="24">
    <location>
        <begin position="299"/>
        <end position="301"/>
    </location>
</feature>
<feature type="turn" evidence="24">
    <location>
        <begin position="303"/>
        <end position="307"/>
    </location>
</feature>
<feature type="strand" evidence="24">
    <location>
        <begin position="314"/>
        <end position="316"/>
    </location>
</feature>
<feature type="helix" evidence="24">
    <location>
        <begin position="324"/>
        <end position="326"/>
    </location>
</feature>
<feature type="helix" evidence="24">
    <location>
        <begin position="327"/>
        <end position="338"/>
    </location>
</feature>
<feature type="helix" evidence="24">
    <location>
        <begin position="341"/>
        <end position="344"/>
    </location>
</feature>
<feature type="helix" evidence="24">
    <location>
        <begin position="348"/>
        <end position="362"/>
    </location>
</feature>
<feature type="strand" evidence="24">
    <location>
        <begin position="365"/>
        <end position="367"/>
    </location>
</feature>
<feature type="helix" evidence="24">
    <location>
        <begin position="369"/>
        <end position="383"/>
    </location>
</feature>
<feature type="helix" evidence="24">
    <location>
        <begin position="393"/>
        <end position="395"/>
    </location>
</feature>
<feature type="helix" evidence="24">
    <location>
        <begin position="396"/>
        <end position="407"/>
    </location>
</feature>
<feature type="helix" evidence="24">
    <location>
        <begin position="412"/>
        <end position="432"/>
    </location>
</feature>
<feature type="helix" evidence="22">
    <location>
        <begin position="434"/>
        <end position="439"/>
    </location>
</feature>
<sequence length="458" mass="51778">MMLIPMASVMAVTEPKWVSVWSRFLWVTLLSMVLGSLLALLLPLGAVEEQCLAVLKGLYLLRSKPDRAQHAATKCTSPSTELSITSRGATLLVAKTKASPAGKLEARAALNQALEMKRQGKREKAQKLFMHALKMDPDFVDALTEFGIFSEEDKDIIQADYLYTRALTISPYHEKALVNRDRTLPLVEEIDQRYFSIIDSKVKKVMSIPKGNSALRRVMEETYYHHIYHTVAIEGNTLTLSEIRHILETRYAVPGKSLEEQNEVIGMHAAMKYINTTLVSRIGSVTISDVLEIHRRVLGYVDPVEAGRFRTTQVLVGHHIPPHPQDVEKQMQEFVQWLNSEEAMNLHPVEFAALAHYKLVYIHPFIDGNGRTSRLLMNLILMQAGYPPITIRKEQRSDYYHVLEAANEGDVRPFIRFIAKCTETTLDTLLFATTEYSVALPEAQPNHSGFKETLPVKP</sequence>
<name>FICD_HUMAN</name>
<protein>
    <recommendedName>
        <fullName evidence="13">Protein adenylyltransferase FICD</fullName>
        <ecNumber evidence="5 7 8">2.7.7.108</ecNumber>
    </recommendedName>
    <alternativeName>
        <fullName evidence="13">AMPylator FICD</fullName>
    </alternativeName>
    <alternativeName>
        <fullName evidence="1">De-AMPylase FICD</fullName>
        <ecNumber evidence="1">3.1.4.-</ecNumber>
    </alternativeName>
    <alternativeName>
        <fullName evidence="11">FIC domain-containing protein</fullName>
    </alternativeName>
    <alternativeName>
        <fullName evidence="11 12">Huntingtin yeast partner E</fullName>
    </alternativeName>
    <alternativeName>
        <fullName>Huntingtin-interacting protein 13</fullName>
        <shortName>HIP-13</shortName>
    </alternativeName>
    <alternativeName>
        <fullName evidence="11 12">Huntingtin-interacting protein E</fullName>
    </alternativeName>
</protein>
<accession>Q9BVA6</accession>
<accession>O75406</accession>
<proteinExistence type="evidence at protein level"/>
<gene>
    <name evidence="16" type="primary">FICD</name>
    <name type="synonym">HIP13</name>
    <name evidence="11 12" type="synonym">HYPE</name>
    <name type="ORF">UNQ3041/PRO9857</name>
</gene>
<dbReference type="EC" id="2.7.7.108" evidence="5 7 8"/>
<dbReference type="EC" id="3.1.4.-" evidence="1"/>
<dbReference type="EMBL" id="AY358992">
    <property type="protein sequence ID" value="AAQ89351.1"/>
    <property type="molecule type" value="mRNA"/>
</dbReference>
<dbReference type="EMBL" id="CH471054">
    <property type="protein sequence ID" value="EAW97813.1"/>
    <property type="molecule type" value="Genomic_DNA"/>
</dbReference>
<dbReference type="EMBL" id="BC001342">
    <property type="protein sequence ID" value="AAH01342.2"/>
    <property type="molecule type" value="mRNA"/>
</dbReference>
<dbReference type="EMBL" id="AF049611">
    <property type="protein sequence ID" value="AAC26847.1"/>
    <property type="molecule type" value="mRNA"/>
</dbReference>
<dbReference type="CCDS" id="CCDS9116.1"/>
<dbReference type="RefSeq" id="NP_009007.2">
    <property type="nucleotide sequence ID" value="NM_007076.2"/>
</dbReference>
<dbReference type="PDB" id="4U04">
    <property type="method" value="X-ray"/>
    <property type="resolution" value="2.48 A"/>
    <property type="chains" value="A/B=102-445"/>
</dbReference>
<dbReference type="PDB" id="4U07">
    <property type="method" value="X-ray"/>
    <property type="resolution" value="2.64 A"/>
    <property type="chains" value="A/B=102-445"/>
</dbReference>
<dbReference type="PDB" id="4U0S">
    <property type="method" value="X-ray"/>
    <property type="resolution" value="2.49 A"/>
    <property type="chains" value="A/B=102-445"/>
</dbReference>
<dbReference type="PDB" id="4U0U">
    <property type="method" value="X-ray"/>
    <property type="resolution" value="2.98 A"/>
    <property type="chains" value="A/B=102-445"/>
</dbReference>
<dbReference type="PDB" id="4U0Z">
    <property type="method" value="X-ray"/>
    <property type="resolution" value="2.95 A"/>
    <property type="chains" value="A/B/C/D/E/F/G/H=102-445"/>
</dbReference>
<dbReference type="PDB" id="6I7G">
    <property type="method" value="X-ray"/>
    <property type="resolution" value="2.70 A"/>
    <property type="chains" value="A/B=104-445"/>
</dbReference>
<dbReference type="PDB" id="6I7H">
    <property type="method" value="X-ray"/>
    <property type="resolution" value="2.25 A"/>
    <property type="chains" value="A=104-445"/>
</dbReference>
<dbReference type="PDB" id="6I7I">
    <property type="method" value="X-ray"/>
    <property type="resolution" value="2.33 A"/>
    <property type="chains" value="A=104-445"/>
</dbReference>
<dbReference type="PDB" id="6I7J">
    <property type="method" value="X-ray"/>
    <property type="resolution" value="2.65 A"/>
    <property type="chains" value="A=104-445"/>
</dbReference>
<dbReference type="PDB" id="6I7K">
    <property type="method" value="X-ray"/>
    <property type="resolution" value="2.54 A"/>
    <property type="chains" value="A=104-445"/>
</dbReference>
<dbReference type="PDB" id="6I7L">
    <property type="method" value="X-ray"/>
    <property type="resolution" value="2.32 A"/>
    <property type="chains" value="A=104-445"/>
</dbReference>
<dbReference type="PDB" id="6ZMD">
    <property type="method" value="X-ray"/>
    <property type="resolution" value="2.64 A"/>
    <property type="chains" value="B=102-445"/>
</dbReference>
<dbReference type="PDB" id="7B7Z">
    <property type="method" value="X-ray"/>
    <property type="resolution" value="1.70 A"/>
    <property type="chains" value="A=104-445"/>
</dbReference>
<dbReference type="PDB" id="7B80">
    <property type="method" value="X-ray"/>
    <property type="resolution" value="1.87 A"/>
    <property type="chains" value="A=104-445"/>
</dbReference>
<dbReference type="PDBsum" id="4U04"/>
<dbReference type="PDBsum" id="4U07"/>
<dbReference type="PDBsum" id="4U0S"/>
<dbReference type="PDBsum" id="4U0U"/>
<dbReference type="PDBsum" id="4U0Z"/>
<dbReference type="PDBsum" id="6I7G"/>
<dbReference type="PDBsum" id="6I7H"/>
<dbReference type="PDBsum" id="6I7I"/>
<dbReference type="PDBsum" id="6I7J"/>
<dbReference type="PDBsum" id="6I7K"/>
<dbReference type="PDBsum" id="6I7L"/>
<dbReference type="PDBsum" id="6ZMD"/>
<dbReference type="PDBsum" id="7B7Z"/>
<dbReference type="PDBsum" id="7B80"/>
<dbReference type="SMR" id="Q9BVA6"/>
<dbReference type="BioGRID" id="116324">
    <property type="interactions" value="6"/>
</dbReference>
<dbReference type="DIP" id="DIP-44884N"/>
<dbReference type="FunCoup" id="Q9BVA6">
    <property type="interactions" value="368"/>
</dbReference>
<dbReference type="IntAct" id="Q9BVA6">
    <property type="interactions" value="7"/>
</dbReference>
<dbReference type="STRING" id="9606.ENSP00000446479"/>
<dbReference type="GlyCosmos" id="Q9BVA6">
    <property type="glycosylation" value="2 sites, No reported glycans"/>
</dbReference>
<dbReference type="GlyGen" id="Q9BVA6">
    <property type="glycosylation" value="2 sites, 2 N-linked glycans (1 site)"/>
</dbReference>
<dbReference type="iPTMnet" id="Q9BVA6"/>
<dbReference type="PhosphoSitePlus" id="Q9BVA6"/>
<dbReference type="BioMuta" id="FICD"/>
<dbReference type="DMDM" id="74761284"/>
<dbReference type="jPOST" id="Q9BVA6"/>
<dbReference type="MassIVE" id="Q9BVA6"/>
<dbReference type="PaxDb" id="9606-ENSP00000446479"/>
<dbReference type="PeptideAtlas" id="Q9BVA6"/>
<dbReference type="ProteomicsDB" id="79191"/>
<dbReference type="Antibodypedia" id="18273">
    <property type="antibodies" value="299 antibodies from 25 providers"/>
</dbReference>
<dbReference type="DNASU" id="11153"/>
<dbReference type="Ensembl" id="ENST00000552695.6">
    <property type="protein sequence ID" value="ENSP00000446479.1"/>
    <property type="gene ID" value="ENSG00000198855.7"/>
</dbReference>
<dbReference type="GeneID" id="11153"/>
<dbReference type="KEGG" id="hsa:11153"/>
<dbReference type="MANE-Select" id="ENST00000552695.6">
    <property type="protein sequence ID" value="ENSP00000446479.1"/>
    <property type="RefSeq nucleotide sequence ID" value="NM_007076.3"/>
    <property type="RefSeq protein sequence ID" value="NP_009007.2"/>
</dbReference>
<dbReference type="UCSC" id="uc001tmx.2">
    <property type="organism name" value="human"/>
</dbReference>
<dbReference type="AGR" id="HGNC:18416"/>
<dbReference type="CTD" id="11153"/>
<dbReference type="DisGeNET" id="11153"/>
<dbReference type="GeneCards" id="FICD"/>
<dbReference type="HGNC" id="HGNC:18416">
    <property type="gene designation" value="FICD"/>
</dbReference>
<dbReference type="HPA" id="ENSG00000198855">
    <property type="expression patterns" value="Low tissue specificity"/>
</dbReference>
<dbReference type="MalaCards" id="FICD"/>
<dbReference type="MIM" id="620875">
    <property type="type" value="gene"/>
</dbReference>
<dbReference type="MIM" id="620911">
    <property type="type" value="phenotype"/>
</dbReference>
<dbReference type="neXtProt" id="NX_Q9BVA6"/>
<dbReference type="OpenTargets" id="ENSG00000198855"/>
<dbReference type="PharmGKB" id="PA162388517"/>
<dbReference type="VEuPathDB" id="HostDB:ENSG00000198855"/>
<dbReference type="eggNOG" id="KOG3824">
    <property type="taxonomic scope" value="Eukaryota"/>
</dbReference>
<dbReference type="GeneTree" id="ENSGT00390000008873"/>
<dbReference type="HOGENOM" id="CLU_040460_0_0_1"/>
<dbReference type="InParanoid" id="Q9BVA6"/>
<dbReference type="OMA" id="QLRCQLW"/>
<dbReference type="OrthoDB" id="439046at2759"/>
<dbReference type="PAN-GO" id="Q9BVA6">
    <property type="GO annotations" value="0 GO annotations based on evolutionary models"/>
</dbReference>
<dbReference type="PhylomeDB" id="Q9BVA6"/>
<dbReference type="TreeFam" id="TF314692"/>
<dbReference type="PathwayCommons" id="Q9BVA6"/>
<dbReference type="SignaLink" id="Q9BVA6"/>
<dbReference type="BioGRID-ORCS" id="11153">
    <property type="hits" value="20 hits in 1162 CRISPR screens"/>
</dbReference>
<dbReference type="EvolutionaryTrace" id="Q9BVA6"/>
<dbReference type="GenomeRNAi" id="11153"/>
<dbReference type="Pharos" id="Q9BVA6">
    <property type="development level" value="Tbio"/>
</dbReference>
<dbReference type="PRO" id="PR:Q9BVA6"/>
<dbReference type="Proteomes" id="UP000005640">
    <property type="component" value="Chromosome 12"/>
</dbReference>
<dbReference type="RNAct" id="Q9BVA6">
    <property type="molecule type" value="protein"/>
</dbReference>
<dbReference type="Bgee" id="ENSG00000198855">
    <property type="expression patterns" value="Expressed in buccal mucosa cell and 151 other cell types or tissues"/>
</dbReference>
<dbReference type="ExpressionAtlas" id="Q9BVA6">
    <property type="expression patterns" value="baseline and differential"/>
</dbReference>
<dbReference type="GO" id="GO:0005783">
    <property type="term" value="C:endoplasmic reticulum"/>
    <property type="evidence" value="ECO:0000315"/>
    <property type="project" value="UniProtKB"/>
</dbReference>
<dbReference type="GO" id="GO:0005789">
    <property type="term" value="C:endoplasmic reticulum membrane"/>
    <property type="evidence" value="ECO:0000314"/>
    <property type="project" value="UniProtKB"/>
</dbReference>
<dbReference type="GO" id="GO:0070733">
    <property type="term" value="F:AMPylase activity"/>
    <property type="evidence" value="ECO:0000314"/>
    <property type="project" value="UniProtKB"/>
</dbReference>
<dbReference type="GO" id="GO:0005524">
    <property type="term" value="F:ATP binding"/>
    <property type="evidence" value="ECO:0000314"/>
    <property type="project" value="UniProtKB"/>
</dbReference>
<dbReference type="GO" id="GO:0030544">
    <property type="term" value="F:Hsp70 protein binding"/>
    <property type="evidence" value="ECO:0000353"/>
    <property type="project" value="UniProtKB"/>
</dbReference>
<dbReference type="GO" id="GO:0042802">
    <property type="term" value="F:identical protein binding"/>
    <property type="evidence" value="ECO:0000353"/>
    <property type="project" value="IntAct"/>
</dbReference>
<dbReference type="GO" id="GO:0044603">
    <property type="term" value="F:protein adenylylhydrolase activity"/>
    <property type="evidence" value="ECO:0000315"/>
    <property type="project" value="UniProtKB"/>
</dbReference>
<dbReference type="GO" id="GO:0042803">
    <property type="term" value="F:protein homodimerization activity"/>
    <property type="evidence" value="ECO:0000314"/>
    <property type="project" value="UniProtKB"/>
</dbReference>
<dbReference type="GO" id="GO:0051087">
    <property type="term" value="F:protein-folding chaperone binding"/>
    <property type="evidence" value="ECO:0000314"/>
    <property type="project" value="UniProtKB"/>
</dbReference>
<dbReference type="GO" id="GO:0034260">
    <property type="term" value="P:negative regulation of GTPase activity"/>
    <property type="evidence" value="ECO:0000304"/>
    <property type="project" value="UniProtKB"/>
</dbReference>
<dbReference type="GO" id="GO:0018117">
    <property type="term" value="P:protein adenylylation"/>
    <property type="evidence" value="ECO:0000314"/>
    <property type="project" value="UniProtKB"/>
</dbReference>
<dbReference type="GO" id="GO:0044602">
    <property type="term" value="P:protein deadenylylation"/>
    <property type="evidence" value="ECO:0000250"/>
    <property type="project" value="UniProtKB"/>
</dbReference>
<dbReference type="GO" id="GO:1903894">
    <property type="term" value="P:regulation of IRE1-mediated unfolded protein response"/>
    <property type="evidence" value="ECO:0000314"/>
    <property type="project" value="UniProtKB"/>
</dbReference>
<dbReference type="GO" id="GO:0034976">
    <property type="term" value="P:response to endoplasmic reticulum stress"/>
    <property type="evidence" value="ECO:0000314"/>
    <property type="project" value="UniProtKB"/>
</dbReference>
<dbReference type="GO" id="GO:0006986">
    <property type="term" value="P:response to unfolded protein"/>
    <property type="evidence" value="ECO:0007669"/>
    <property type="project" value="UniProtKB-KW"/>
</dbReference>
<dbReference type="FunFam" id="1.10.3290.10:FF:000001">
    <property type="entry name" value="adenosine monophosphate-protein transferase FICD"/>
    <property type="match status" value="1"/>
</dbReference>
<dbReference type="FunFam" id="1.25.40.10:FF:000188">
    <property type="entry name" value="adenosine monophosphate-protein transferase FICD"/>
    <property type="match status" value="1"/>
</dbReference>
<dbReference type="Gene3D" id="1.10.3290.10">
    <property type="entry name" value="Fido-like domain"/>
    <property type="match status" value="1"/>
</dbReference>
<dbReference type="Gene3D" id="1.25.40.10">
    <property type="entry name" value="Tetratricopeptide repeat domain"/>
    <property type="match status" value="1"/>
</dbReference>
<dbReference type="InterPro" id="IPR003812">
    <property type="entry name" value="Fido"/>
</dbReference>
<dbReference type="InterPro" id="IPR036597">
    <property type="entry name" value="Fido-like_dom_sf"/>
</dbReference>
<dbReference type="InterPro" id="IPR040198">
    <property type="entry name" value="Fido_containing"/>
</dbReference>
<dbReference type="InterPro" id="IPR011990">
    <property type="entry name" value="TPR-like_helical_dom_sf"/>
</dbReference>
<dbReference type="InterPro" id="IPR019734">
    <property type="entry name" value="TPR_rpt"/>
</dbReference>
<dbReference type="PANTHER" id="PTHR13504">
    <property type="entry name" value="FIDO DOMAIN-CONTAINING PROTEIN DDB_G0283145"/>
    <property type="match status" value="1"/>
</dbReference>
<dbReference type="PANTHER" id="PTHR13504:SF34">
    <property type="entry name" value="PROTEIN ADENYLYLTRANSFERASE FICD"/>
    <property type="match status" value="1"/>
</dbReference>
<dbReference type="Pfam" id="PF02661">
    <property type="entry name" value="Fic"/>
    <property type="match status" value="1"/>
</dbReference>
<dbReference type="SUPFAM" id="SSF140931">
    <property type="entry name" value="Fic-like"/>
    <property type="match status" value="1"/>
</dbReference>
<dbReference type="SUPFAM" id="SSF48452">
    <property type="entry name" value="TPR-like"/>
    <property type="match status" value="1"/>
</dbReference>
<dbReference type="PROSITE" id="PS51459">
    <property type="entry name" value="FIDO"/>
    <property type="match status" value="1"/>
</dbReference>
<dbReference type="PROSITE" id="PS50005">
    <property type="entry name" value="TPR"/>
    <property type="match status" value="2"/>
</dbReference>
<dbReference type="PROSITE" id="PS50293">
    <property type="entry name" value="TPR_REGION"/>
    <property type="match status" value="1"/>
</dbReference>
<evidence type="ECO:0000250" key="1">
    <source>
        <dbReference type="UniProtKB" id="A0A061I403"/>
    </source>
</evidence>
<evidence type="ECO:0000255" key="2"/>
<evidence type="ECO:0000255" key="3">
    <source>
        <dbReference type="PROSITE-ProRule" id="PRU00498"/>
    </source>
</evidence>
<evidence type="ECO:0000255" key="4">
    <source>
        <dbReference type="PROSITE-ProRule" id="PRU00791"/>
    </source>
</evidence>
<evidence type="ECO:0000269" key="5">
    <source>
    </source>
</evidence>
<evidence type="ECO:0000269" key="6">
    <source>
    </source>
</evidence>
<evidence type="ECO:0000269" key="7">
    <source>
    </source>
</evidence>
<evidence type="ECO:0000269" key="8">
    <source>
    </source>
</evidence>
<evidence type="ECO:0000269" key="9">
    <source>
    </source>
</evidence>
<evidence type="ECO:0000269" key="10">
    <source>
    </source>
</evidence>
<evidence type="ECO:0000303" key="11">
    <source>
    </source>
</evidence>
<evidence type="ECO:0000303" key="12">
    <source>
    </source>
</evidence>
<evidence type="ECO:0000305" key="13"/>
<evidence type="ECO:0000305" key="14">
    <source>
    </source>
</evidence>
<evidence type="ECO:0000305" key="15">
    <source>
    </source>
</evidence>
<evidence type="ECO:0000312" key="16">
    <source>
        <dbReference type="HGNC" id="HGNC:18416"/>
    </source>
</evidence>
<evidence type="ECO:0007744" key="17">
    <source>
        <dbReference type="PDB" id="4U04"/>
    </source>
</evidence>
<evidence type="ECO:0007744" key="18">
    <source>
        <dbReference type="PDB" id="4U07"/>
    </source>
</evidence>
<evidence type="ECO:0007744" key="19">
    <source>
        <dbReference type="PDB" id="4U0S"/>
    </source>
</evidence>
<evidence type="ECO:0007744" key="20">
    <source>
        <dbReference type="PDB" id="4U0U"/>
    </source>
</evidence>
<evidence type="ECO:0007744" key="21">
    <source>
        <dbReference type="PDB" id="4U0Z"/>
    </source>
</evidence>
<evidence type="ECO:0007829" key="22">
    <source>
        <dbReference type="PDB" id="6I7G"/>
    </source>
</evidence>
<evidence type="ECO:0007829" key="23">
    <source>
        <dbReference type="PDB" id="6I7I"/>
    </source>
</evidence>
<evidence type="ECO:0007829" key="24">
    <source>
        <dbReference type="PDB" id="7B7Z"/>
    </source>
</evidence>
<organism>
    <name type="scientific">Homo sapiens</name>
    <name type="common">Human</name>
    <dbReference type="NCBI Taxonomy" id="9606"/>
    <lineage>
        <taxon>Eukaryota</taxon>
        <taxon>Metazoa</taxon>
        <taxon>Chordata</taxon>
        <taxon>Craniata</taxon>
        <taxon>Vertebrata</taxon>
        <taxon>Euteleostomi</taxon>
        <taxon>Mammalia</taxon>
        <taxon>Eutheria</taxon>
        <taxon>Euarchontoglires</taxon>
        <taxon>Primates</taxon>
        <taxon>Haplorrhini</taxon>
        <taxon>Catarrhini</taxon>
        <taxon>Hominidae</taxon>
        <taxon>Homo</taxon>
    </lineage>
</organism>
<keyword id="KW-0002">3D-structure</keyword>
<keyword id="KW-0067">ATP-binding</keyword>
<keyword id="KW-0225">Disease variant</keyword>
<keyword id="KW-0256">Endoplasmic reticulum</keyword>
<keyword id="KW-0325">Glycoprotein</keyword>
<keyword id="KW-0890">Hereditary spastic paraplegia</keyword>
<keyword id="KW-0378">Hydrolase</keyword>
<keyword id="KW-0460">Magnesium</keyword>
<keyword id="KW-0464">Manganese</keyword>
<keyword id="KW-0472">Membrane</keyword>
<keyword id="KW-0523">Neurodegeneration</keyword>
<keyword id="KW-0547">Nucleotide-binding</keyword>
<keyword id="KW-0548">Nucleotidyltransferase</keyword>
<keyword id="KW-0597">Phosphoprotein</keyword>
<keyword id="KW-1267">Proteomics identification</keyword>
<keyword id="KW-1185">Reference proteome</keyword>
<keyword id="KW-0677">Repeat</keyword>
<keyword id="KW-0735">Signal-anchor</keyword>
<keyword id="KW-0802">TPR repeat</keyword>
<keyword id="KW-0808">Transferase</keyword>
<keyword id="KW-0812">Transmembrane</keyword>
<keyword id="KW-1133">Transmembrane helix</keyword>
<keyword id="KW-0834">Unfolded protein response</keyword>